<keyword id="KW-0963">Cytoplasm</keyword>
<keyword id="KW-0238">DNA-binding</keyword>
<keyword id="KW-0597">Phosphoprotein</keyword>
<keyword id="KW-1185">Reference proteome</keyword>
<keyword id="KW-0804">Transcription</keyword>
<keyword id="KW-0805">Transcription regulation</keyword>
<keyword id="KW-0902">Two-component regulatory system</keyword>
<gene>
    <name type="primary">ypdB</name>
    <name type="ordered locus">SF2444.2</name>
    <name type="ordered locus">S2585</name>
</gene>
<dbReference type="EMBL" id="AE005674">
    <property type="protein sequence ID" value="AAN43957.2"/>
    <property type="molecule type" value="Genomic_DNA"/>
</dbReference>
<dbReference type="EMBL" id="AE014073">
    <property type="protein sequence ID" value="AAP17767.1"/>
    <property type="molecule type" value="Genomic_DNA"/>
</dbReference>
<dbReference type="RefSeq" id="NP_708250.2">
    <property type="nucleotide sequence ID" value="NC_004337.2"/>
</dbReference>
<dbReference type="RefSeq" id="WP_001295458.1">
    <property type="nucleotide sequence ID" value="NZ_WPGW01000027.1"/>
</dbReference>
<dbReference type="SMR" id="P0AE41"/>
<dbReference type="STRING" id="198214.SF2447"/>
<dbReference type="PaxDb" id="198214-SF2447"/>
<dbReference type="GeneID" id="93774747"/>
<dbReference type="KEGG" id="sfl:SF2447"/>
<dbReference type="KEGG" id="sfx:S2585"/>
<dbReference type="PATRIC" id="fig|198214.7.peg.2923"/>
<dbReference type="HOGENOM" id="CLU_000445_14_1_6"/>
<dbReference type="Proteomes" id="UP000001006">
    <property type="component" value="Chromosome"/>
</dbReference>
<dbReference type="Proteomes" id="UP000002673">
    <property type="component" value="Chromosome"/>
</dbReference>
<dbReference type="GO" id="GO:0005737">
    <property type="term" value="C:cytoplasm"/>
    <property type="evidence" value="ECO:0007669"/>
    <property type="project" value="UniProtKB-SubCell"/>
</dbReference>
<dbReference type="GO" id="GO:0003677">
    <property type="term" value="F:DNA binding"/>
    <property type="evidence" value="ECO:0007669"/>
    <property type="project" value="UniProtKB-KW"/>
</dbReference>
<dbReference type="GO" id="GO:0000156">
    <property type="term" value="F:phosphorelay response regulator activity"/>
    <property type="evidence" value="ECO:0007669"/>
    <property type="project" value="InterPro"/>
</dbReference>
<dbReference type="CDD" id="cd17532">
    <property type="entry name" value="REC_LytTR_AlgR-like"/>
    <property type="match status" value="1"/>
</dbReference>
<dbReference type="FunFam" id="2.20.25.10:FF:000010">
    <property type="entry name" value="Two-component system response regulator"/>
    <property type="match status" value="1"/>
</dbReference>
<dbReference type="FunFam" id="2.40.50.40:FF:000013">
    <property type="entry name" value="Two-component system response regulator"/>
    <property type="match status" value="1"/>
</dbReference>
<dbReference type="FunFam" id="3.40.50.2300:FF:000104">
    <property type="entry name" value="Two-component system response regulator"/>
    <property type="match status" value="1"/>
</dbReference>
<dbReference type="Gene3D" id="2.20.25.10">
    <property type="match status" value="1"/>
</dbReference>
<dbReference type="Gene3D" id="2.40.50.40">
    <property type="match status" value="1"/>
</dbReference>
<dbReference type="Gene3D" id="3.40.50.2300">
    <property type="match status" value="1"/>
</dbReference>
<dbReference type="InterPro" id="IPR011006">
    <property type="entry name" value="CheY-like_superfamily"/>
</dbReference>
<dbReference type="InterPro" id="IPR046947">
    <property type="entry name" value="LytR-like"/>
</dbReference>
<dbReference type="InterPro" id="IPR007492">
    <property type="entry name" value="LytTR_DNA-bd_dom"/>
</dbReference>
<dbReference type="InterPro" id="IPR001789">
    <property type="entry name" value="Sig_transdc_resp-reg_receiver"/>
</dbReference>
<dbReference type="PANTHER" id="PTHR37299:SF1">
    <property type="entry name" value="STAGE 0 SPORULATION PROTEIN A HOMOLOG"/>
    <property type="match status" value="1"/>
</dbReference>
<dbReference type="PANTHER" id="PTHR37299">
    <property type="entry name" value="TRANSCRIPTIONAL REGULATOR-RELATED"/>
    <property type="match status" value="1"/>
</dbReference>
<dbReference type="Pfam" id="PF04397">
    <property type="entry name" value="LytTR"/>
    <property type="match status" value="1"/>
</dbReference>
<dbReference type="Pfam" id="PF00072">
    <property type="entry name" value="Response_reg"/>
    <property type="match status" value="1"/>
</dbReference>
<dbReference type="SMART" id="SM00850">
    <property type="entry name" value="LytTR"/>
    <property type="match status" value="1"/>
</dbReference>
<dbReference type="SMART" id="SM00448">
    <property type="entry name" value="REC"/>
    <property type="match status" value="1"/>
</dbReference>
<dbReference type="SUPFAM" id="SSF52172">
    <property type="entry name" value="CheY-like"/>
    <property type="match status" value="1"/>
</dbReference>
<dbReference type="PROSITE" id="PS50930">
    <property type="entry name" value="HTH_LYTTR"/>
    <property type="match status" value="1"/>
</dbReference>
<dbReference type="PROSITE" id="PS50110">
    <property type="entry name" value="RESPONSE_REGULATORY"/>
    <property type="match status" value="1"/>
</dbReference>
<feature type="chain" id="PRO_0000081383" description="Transcriptional regulatory protein YpdB">
    <location>
        <begin position="1"/>
        <end position="244"/>
    </location>
</feature>
<feature type="domain" description="Response regulatory" evidence="4">
    <location>
        <begin position="2"/>
        <end position="116"/>
    </location>
</feature>
<feature type="domain" description="HTH LytTR-type" evidence="3">
    <location>
        <begin position="139"/>
        <end position="244"/>
    </location>
</feature>
<feature type="modified residue" description="4-aspartylphosphate" evidence="4">
    <location>
        <position position="53"/>
    </location>
</feature>
<reference key="1">
    <citation type="journal article" date="2002" name="Nucleic Acids Res.">
        <title>Genome sequence of Shigella flexneri 2a: insights into pathogenicity through comparison with genomes of Escherichia coli K12 and O157.</title>
        <authorList>
            <person name="Jin Q."/>
            <person name="Yuan Z."/>
            <person name="Xu J."/>
            <person name="Wang Y."/>
            <person name="Shen Y."/>
            <person name="Lu W."/>
            <person name="Wang J."/>
            <person name="Liu H."/>
            <person name="Yang J."/>
            <person name="Yang F."/>
            <person name="Zhang X."/>
            <person name="Zhang J."/>
            <person name="Yang G."/>
            <person name="Wu H."/>
            <person name="Qu D."/>
            <person name="Dong J."/>
            <person name="Sun L."/>
            <person name="Xue Y."/>
            <person name="Zhao A."/>
            <person name="Gao Y."/>
            <person name="Zhu J."/>
            <person name="Kan B."/>
            <person name="Ding K."/>
            <person name="Chen S."/>
            <person name="Cheng H."/>
            <person name="Yao Z."/>
            <person name="He B."/>
            <person name="Chen R."/>
            <person name="Ma D."/>
            <person name="Qiang B."/>
            <person name="Wen Y."/>
            <person name="Hou Y."/>
            <person name="Yu J."/>
        </authorList>
    </citation>
    <scope>NUCLEOTIDE SEQUENCE [LARGE SCALE GENOMIC DNA]</scope>
    <source>
        <strain>301 / Serotype 2a</strain>
    </source>
</reference>
<reference key="2">
    <citation type="journal article" date="2003" name="Infect. Immun.">
        <title>Complete genome sequence and comparative genomics of Shigella flexneri serotype 2a strain 2457T.</title>
        <authorList>
            <person name="Wei J."/>
            <person name="Goldberg M.B."/>
            <person name="Burland V."/>
            <person name="Venkatesan M.M."/>
            <person name="Deng W."/>
            <person name="Fournier G."/>
            <person name="Mayhew G.F."/>
            <person name="Plunkett G. III"/>
            <person name="Rose D.J."/>
            <person name="Darling A."/>
            <person name="Mau B."/>
            <person name="Perna N.T."/>
            <person name="Payne S.M."/>
            <person name="Runyen-Janecky L.J."/>
            <person name="Zhou S."/>
            <person name="Schwartz D.C."/>
            <person name="Blattner F.R."/>
        </authorList>
    </citation>
    <scope>NUCLEOTIDE SEQUENCE [LARGE SCALE GENOMIC DNA]</scope>
    <source>
        <strain>ATCC 700930 / 2457T / Serotype 2a</strain>
    </source>
</reference>
<evidence type="ECO:0000250" key="1"/>
<evidence type="ECO:0000250" key="2">
    <source>
        <dbReference type="UniProtKB" id="P0AE39"/>
    </source>
</evidence>
<evidence type="ECO:0000255" key="3">
    <source>
        <dbReference type="PROSITE-ProRule" id="PRU00112"/>
    </source>
</evidence>
<evidence type="ECO:0000255" key="4">
    <source>
        <dbReference type="PROSITE-ProRule" id="PRU00169"/>
    </source>
</evidence>
<sequence>MKVIIVEDEFLAQQELSWLIKEHSQMEIVGTFDDGLDVLKFLQHNRVDAIFLDINIPSLDGVLLAQNISQFAHKPFIVFITAWKEHAVEAFELEAFDYILKPYQESRITGMLQKLEAAWQQQQTSSTPAATVTRENDTINLVKDERIIVTPINDIYYAEAHEKMTFVYTRRESYVMPMNITEFCSKLPPSHFFRCHRSFCVNLNKIREIEPWFNNTYILRLKDLDFEVPVSRSKVKEFRQLMHL</sequence>
<name>YPDB_SHIFL</name>
<proteinExistence type="inferred from homology"/>
<organism>
    <name type="scientific">Shigella flexneri</name>
    <dbReference type="NCBI Taxonomy" id="623"/>
    <lineage>
        <taxon>Bacteria</taxon>
        <taxon>Pseudomonadati</taxon>
        <taxon>Pseudomonadota</taxon>
        <taxon>Gammaproteobacteria</taxon>
        <taxon>Enterobacterales</taxon>
        <taxon>Enterobacteriaceae</taxon>
        <taxon>Shigella</taxon>
    </lineage>
</organism>
<comment type="function">
    <text evidence="2">Member of the two-component regulatory system YpdA/YpdB. YpdB regulates expression of yhjX by binding to its promoter region.</text>
</comment>
<comment type="subcellular location">
    <subcellularLocation>
        <location evidence="1">Cytoplasm</location>
    </subcellularLocation>
</comment>
<comment type="PTM">
    <text evidence="1">Phosphorylated by YpdA.</text>
</comment>
<accession>P0AE41</accession>
<accession>P77742</accession>
<protein>
    <recommendedName>
        <fullName evidence="2">Transcriptional regulatory protein YpdB</fullName>
    </recommendedName>
</protein>